<feature type="chain" id="PRO_0000346988" description="Uncharacterized protein DDB_G0288467">
    <location>
        <begin position="1"/>
        <end position="176"/>
    </location>
</feature>
<feature type="region of interest" description="Disordered" evidence="1">
    <location>
        <begin position="1"/>
        <end position="88"/>
    </location>
</feature>
<feature type="region of interest" description="Disordered" evidence="1">
    <location>
        <begin position="109"/>
        <end position="132"/>
    </location>
</feature>
<feature type="compositionally biased region" description="Polar residues" evidence="1">
    <location>
        <begin position="1"/>
        <end position="12"/>
    </location>
</feature>
<feature type="compositionally biased region" description="Low complexity" evidence="1">
    <location>
        <begin position="13"/>
        <end position="24"/>
    </location>
</feature>
<feature type="compositionally biased region" description="Polar residues" evidence="1">
    <location>
        <begin position="37"/>
        <end position="46"/>
    </location>
</feature>
<feature type="compositionally biased region" description="Low complexity" evidence="1">
    <location>
        <begin position="47"/>
        <end position="88"/>
    </location>
</feature>
<name>Y9343_DICDI</name>
<organism>
    <name type="scientific">Dictyostelium discoideum</name>
    <name type="common">Social amoeba</name>
    <dbReference type="NCBI Taxonomy" id="44689"/>
    <lineage>
        <taxon>Eukaryota</taxon>
        <taxon>Amoebozoa</taxon>
        <taxon>Evosea</taxon>
        <taxon>Eumycetozoa</taxon>
        <taxon>Dictyostelia</taxon>
        <taxon>Dictyosteliales</taxon>
        <taxon>Dictyosteliaceae</taxon>
        <taxon>Dictyostelium</taxon>
    </lineage>
</organism>
<accession>Q54IW9</accession>
<dbReference type="EMBL" id="AAFI02000111">
    <property type="protein sequence ID" value="EAL63205.1"/>
    <property type="molecule type" value="Genomic_DNA"/>
</dbReference>
<dbReference type="RefSeq" id="XP_636707.1">
    <property type="nucleotide sequence ID" value="XM_631615.1"/>
</dbReference>
<dbReference type="PaxDb" id="44689-DDB0219343"/>
<dbReference type="EnsemblProtists" id="EAL63205">
    <property type="protein sequence ID" value="EAL63205"/>
    <property type="gene ID" value="DDB_G0288467"/>
</dbReference>
<dbReference type="GeneID" id="8626639"/>
<dbReference type="KEGG" id="ddi:DDB_G0288467"/>
<dbReference type="dictyBase" id="DDB_G0288467"/>
<dbReference type="VEuPathDB" id="AmoebaDB:DDB_G0288467"/>
<dbReference type="HOGENOM" id="CLU_1527950_0_0_1"/>
<dbReference type="InParanoid" id="Q54IW9"/>
<dbReference type="PRO" id="PR:Q54IW9"/>
<dbReference type="Proteomes" id="UP000002195">
    <property type="component" value="Chromosome 5"/>
</dbReference>
<dbReference type="SUPFAM" id="SSF81995">
    <property type="entry name" value="beta-sandwich domain of Sec23/24"/>
    <property type="match status" value="1"/>
</dbReference>
<evidence type="ECO:0000256" key="1">
    <source>
        <dbReference type="SAM" id="MobiDB-lite"/>
    </source>
</evidence>
<keyword id="KW-1185">Reference proteome</keyword>
<protein>
    <recommendedName>
        <fullName>Uncharacterized protein DDB_G0288467</fullName>
    </recommendedName>
</protein>
<proteinExistence type="predicted"/>
<gene>
    <name type="ORF">DDB_G0288467</name>
</gene>
<reference key="1">
    <citation type="journal article" date="2005" name="Nature">
        <title>The genome of the social amoeba Dictyostelium discoideum.</title>
        <authorList>
            <person name="Eichinger L."/>
            <person name="Pachebat J.A."/>
            <person name="Gloeckner G."/>
            <person name="Rajandream M.A."/>
            <person name="Sucgang R."/>
            <person name="Berriman M."/>
            <person name="Song J."/>
            <person name="Olsen R."/>
            <person name="Szafranski K."/>
            <person name="Xu Q."/>
            <person name="Tunggal B."/>
            <person name="Kummerfeld S."/>
            <person name="Madera M."/>
            <person name="Konfortov B.A."/>
            <person name="Rivero F."/>
            <person name="Bankier A.T."/>
            <person name="Lehmann R."/>
            <person name="Hamlin N."/>
            <person name="Davies R."/>
            <person name="Gaudet P."/>
            <person name="Fey P."/>
            <person name="Pilcher K."/>
            <person name="Chen G."/>
            <person name="Saunders D."/>
            <person name="Sodergren E.J."/>
            <person name="Davis P."/>
            <person name="Kerhornou A."/>
            <person name="Nie X."/>
            <person name="Hall N."/>
            <person name="Anjard C."/>
            <person name="Hemphill L."/>
            <person name="Bason N."/>
            <person name="Farbrother P."/>
            <person name="Desany B."/>
            <person name="Just E."/>
            <person name="Morio T."/>
            <person name="Rost R."/>
            <person name="Churcher C.M."/>
            <person name="Cooper J."/>
            <person name="Haydock S."/>
            <person name="van Driessche N."/>
            <person name="Cronin A."/>
            <person name="Goodhead I."/>
            <person name="Muzny D.M."/>
            <person name="Mourier T."/>
            <person name="Pain A."/>
            <person name="Lu M."/>
            <person name="Harper D."/>
            <person name="Lindsay R."/>
            <person name="Hauser H."/>
            <person name="James K.D."/>
            <person name="Quiles M."/>
            <person name="Madan Babu M."/>
            <person name="Saito T."/>
            <person name="Buchrieser C."/>
            <person name="Wardroper A."/>
            <person name="Felder M."/>
            <person name="Thangavelu M."/>
            <person name="Johnson D."/>
            <person name="Knights A."/>
            <person name="Loulseged H."/>
            <person name="Mungall K.L."/>
            <person name="Oliver K."/>
            <person name="Price C."/>
            <person name="Quail M.A."/>
            <person name="Urushihara H."/>
            <person name="Hernandez J."/>
            <person name="Rabbinowitsch E."/>
            <person name="Steffen D."/>
            <person name="Sanders M."/>
            <person name="Ma J."/>
            <person name="Kohara Y."/>
            <person name="Sharp S."/>
            <person name="Simmonds M.N."/>
            <person name="Spiegler S."/>
            <person name="Tivey A."/>
            <person name="Sugano S."/>
            <person name="White B."/>
            <person name="Walker D."/>
            <person name="Woodward J.R."/>
            <person name="Winckler T."/>
            <person name="Tanaka Y."/>
            <person name="Shaulsky G."/>
            <person name="Schleicher M."/>
            <person name="Weinstock G.M."/>
            <person name="Rosenthal A."/>
            <person name="Cox E.C."/>
            <person name="Chisholm R.L."/>
            <person name="Gibbs R.A."/>
            <person name="Loomis W.F."/>
            <person name="Platzer M."/>
            <person name="Kay R.R."/>
            <person name="Williams J.G."/>
            <person name="Dear P.H."/>
            <person name="Noegel A.A."/>
            <person name="Barrell B.G."/>
            <person name="Kuspa A."/>
        </authorList>
    </citation>
    <scope>NUCLEOTIDE SEQUENCE [LARGE SCALE GENOMIC DNA]</scope>
    <source>
        <strain>AX4</strain>
    </source>
</reference>
<sequence length="176" mass="20042">MRLPYSSSKPIPTNNNNNNNNTNNGISINKIPKSHYSYYQTQENNKPQQSQQHPLLQHQQQQQQQQQQQQQQQQQQQQQQQQQQPQQQPQIATITATISISPSINNIIVNNSPIKTPSKKHRSSSKKSPSSSKKLNKVLSCCFVCQSSISNPFIVKETPKANHYFCSIQCFAQASP</sequence>